<proteinExistence type="evidence at protein level"/>
<gene>
    <name type="primary">forC</name>
    <name type="ORF">DDB_G0287295</name>
</gene>
<keyword id="KW-0002">3D-structure</keyword>
<keyword id="KW-0009">Actin-binding</keyword>
<keyword id="KW-0175">Coiled coil</keyword>
<keyword id="KW-0963">Cytoplasm</keyword>
<keyword id="KW-0206">Cytoskeleton</keyword>
<keyword id="KW-1185">Reference proteome</keyword>
<sequence>MKIRVELINGNEHRTSSTPQQPQQNPSVSHIFDGETAVKDHIKVLLTHFKIPVDKVSSYALQNPFTLAYVEDSFLTPERLVEAEKSYFILRMKPHAIADRVVDQLTKIEPTSPHIKDTIFNIRYQMKDVEYVEEFIIKGGINQLLAVIIKSRGNTQSYALTALRCFMGYNSGLEEVMSRPQLIDKLYSLVCSVGVLPSVCRQAIELLFCVCNFDGFQLVHRSAKNHAQETSTPAYSNLITLLSSGDMETQLNTLTLFNCLLDNAPNPRKSEKLLSRWQQLGIIKILKSQEHVTHSDFRTQIARFQANSGFGIDGSGRKRTLTRQLSTQELEFQLHQFREQQPLISLLTSELKFLRNAIKSAIENGSYINYRAPTERYDEYSQRKLEMIGDSPTNLQFLKRNDKFTNAFRKSMYVRSPNTSDLFDSSTLEDTYDGNNDTNSCTSISTSSTPIHISQPTTLIVPSTTPNHPPQQSQQTPPLQLQKEKEKEKEKEKEKEKEKEKEQQQQQQQSNKQSTPKPNLSCLLSPITISNTLNNNNNNNNNTNNNIIKSNNNNNNNNCTIKDLSPIVKSEKSNEDEIHEISLNGASSNHEEPIKYKLQPTKSPITPSKRMKPLHWTRILNSQFEGKKTIWNSYLPEVTFEEELFVDLFSLYTERIVSFSGSPVGSGTSISGGGPIKSKPIQKVISVLSQKRSNAIIVMCGKLPSDDILIRAIRNLDSNKLSLDGVSSIISNFPTSEELASIHELHSNEVILDKPERWCLMIDGFPMIKHRLRCWEFMLKIEDSLKSIIESIDTVLLACKELRTSITINCLFSLLLQLGNYLNGGHLYRGQSDGFNLESLSKMIEIKDNSNSGSLLDFAIKTLYQQSPMKGNSNTSIHLELAHVPNASLINFTDVGTSVSKLLQDYSEIVLMSDEIQQTTDKDDPFLDIVPKFMGTILLILKNLQTKFLETEKYLFETIDYFNPTNQTLQQYQQQQYQQYQQQQFQQNIINNNNNNNNNNSNNNNNNISGNTTTTTTTTTTTTTGSIINNNNNNNNNNNNSNNNIINNNNSQSNLQSLLHPQYYLSNSSSSSSSSYKITPPLSSSLSITSQEWNQQKFTCEKFFTLFSTITTAFKKSPSKRLSQKGFGLKISNSDDPMAVIIEALKTGSPNDMVKRAF</sequence>
<accession>Q54KF1</accession>
<accession>Q8IU40</accession>
<name>FORC_DICDI</name>
<protein>
    <recommendedName>
        <fullName>Formin-C</fullName>
    </recommendedName>
</protein>
<reference key="1">
    <citation type="journal article" date="2003" name="J. Cell Sci.">
        <title>ForC, a novel type of formin family protein lacking an FH1 domain, is involved in multicellular development in Dictyostelium discoideum.</title>
        <authorList>
            <person name="Kitayama C."/>
            <person name="Uyeda T.Q.P."/>
        </authorList>
    </citation>
    <scope>NUCLEOTIDE SEQUENCE [MRNA]</scope>
    <scope>DISRUPTION PHENOTYPE</scope>
    <scope>FUNCTION</scope>
    <scope>SUBCELLULAR LOCATION</scope>
</reference>
<reference key="2">
    <citation type="journal article" date="2005" name="Nature">
        <title>The genome of the social amoeba Dictyostelium discoideum.</title>
        <authorList>
            <person name="Eichinger L."/>
            <person name="Pachebat J.A."/>
            <person name="Gloeckner G."/>
            <person name="Rajandream M.A."/>
            <person name="Sucgang R."/>
            <person name="Berriman M."/>
            <person name="Song J."/>
            <person name="Olsen R."/>
            <person name="Szafranski K."/>
            <person name="Xu Q."/>
            <person name="Tunggal B."/>
            <person name="Kummerfeld S."/>
            <person name="Madera M."/>
            <person name="Konfortov B.A."/>
            <person name="Rivero F."/>
            <person name="Bankier A.T."/>
            <person name="Lehmann R."/>
            <person name="Hamlin N."/>
            <person name="Davies R."/>
            <person name="Gaudet P."/>
            <person name="Fey P."/>
            <person name="Pilcher K."/>
            <person name="Chen G."/>
            <person name="Saunders D."/>
            <person name="Sodergren E.J."/>
            <person name="Davis P."/>
            <person name="Kerhornou A."/>
            <person name="Nie X."/>
            <person name="Hall N."/>
            <person name="Anjard C."/>
            <person name="Hemphill L."/>
            <person name="Bason N."/>
            <person name="Farbrother P."/>
            <person name="Desany B."/>
            <person name="Just E."/>
            <person name="Morio T."/>
            <person name="Rost R."/>
            <person name="Churcher C.M."/>
            <person name="Cooper J."/>
            <person name="Haydock S."/>
            <person name="van Driessche N."/>
            <person name="Cronin A."/>
            <person name="Goodhead I."/>
            <person name="Muzny D.M."/>
            <person name="Mourier T."/>
            <person name="Pain A."/>
            <person name="Lu M."/>
            <person name="Harper D."/>
            <person name="Lindsay R."/>
            <person name="Hauser H."/>
            <person name="James K.D."/>
            <person name="Quiles M."/>
            <person name="Madan Babu M."/>
            <person name="Saito T."/>
            <person name="Buchrieser C."/>
            <person name="Wardroper A."/>
            <person name="Felder M."/>
            <person name="Thangavelu M."/>
            <person name="Johnson D."/>
            <person name="Knights A."/>
            <person name="Loulseged H."/>
            <person name="Mungall K.L."/>
            <person name="Oliver K."/>
            <person name="Price C."/>
            <person name="Quail M.A."/>
            <person name="Urushihara H."/>
            <person name="Hernandez J."/>
            <person name="Rabbinowitsch E."/>
            <person name="Steffen D."/>
            <person name="Sanders M."/>
            <person name="Ma J."/>
            <person name="Kohara Y."/>
            <person name="Sharp S."/>
            <person name="Simmonds M.N."/>
            <person name="Spiegler S."/>
            <person name="Tivey A."/>
            <person name="Sugano S."/>
            <person name="White B."/>
            <person name="Walker D."/>
            <person name="Woodward J.R."/>
            <person name="Winckler T."/>
            <person name="Tanaka Y."/>
            <person name="Shaulsky G."/>
            <person name="Schleicher M."/>
            <person name="Weinstock G.M."/>
            <person name="Rosenthal A."/>
            <person name="Cox E.C."/>
            <person name="Chisholm R.L."/>
            <person name="Gibbs R.A."/>
            <person name="Loomis W.F."/>
            <person name="Platzer M."/>
            <person name="Kay R.R."/>
            <person name="Williams J.G."/>
            <person name="Dear P.H."/>
            <person name="Noegel A.A."/>
            <person name="Barrell B.G."/>
            <person name="Kuspa A."/>
        </authorList>
    </citation>
    <scope>NUCLEOTIDE SEQUENCE [LARGE SCALE GENOMIC DNA]</scope>
    <source>
        <strain>AX4</strain>
    </source>
</reference>
<reference key="3">
    <citation type="journal article" date="2004" name="Protoplasma">
        <title>Evolutionarily conserved modules in actin nucleation: lessons from Dictyostelium discoideum and plants. Review article.</title>
        <authorList>
            <person name="Cvrckova F."/>
            <person name="Rivero F."/>
            <person name="Bavlnka B."/>
        </authorList>
    </citation>
    <scope>NOMENCLATURE</scope>
</reference>
<reference key="4">
    <citation type="journal article" date="2005" name="BMC Genomics">
        <title>A comparative sequence analysis reveals a common GBD/FH3-FH1-FH2-DAD architecture in formins from Dictyostelium, fungi and metazoa.</title>
        <authorList>
            <person name="Rivero F."/>
            <person name="Muramoto T."/>
            <person name="Meyer A.-K."/>
            <person name="Urushihara H."/>
            <person name="Uyeda T.Q.P."/>
            <person name="Kitayama C."/>
        </authorList>
    </citation>
    <scope>DEVELOPMENTAL STAGE</scope>
</reference>
<reference key="5">
    <citation type="journal article" date="2006" name="Eur. J. Cell Biol.">
        <title>Rho GTPase signaling in Dictyostelium discoideum: insights from the genome.</title>
        <authorList>
            <person name="Vlahou G."/>
            <person name="Rivero F."/>
        </authorList>
    </citation>
    <scope>INTERACTION WITH RHO GTPASE</scope>
</reference>
<organism>
    <name type="scientific">Dictyostelium discoideum</name>
    <name type="common">Social amoeba</name>
    <dbReference type="NCBI Taxonomy" id="44689"/>
    <lineage>
        <taxon>Eukaryota</taxon>
        <taxon>Amoebozoa</taxon>
        <taxon>Evosea</taxon>
        <taxon>Eumycetozoa</taxon>
        <taxon>Dictyostelia</taxon>
        <taxon>Dictyosteliales</taxon>
        <taxon>Dictyosteliaceae</taxon>
        <taxon>Dictyostelium</taxon>
    </lineage>
</organism>
<feature type="chain" id="PRO_0000363915" description="Formin-C">
    <location>
        <begin position="1"/>
        <end position="1158"/>
    </location>
</feature>
<feature type="domain" description="GBD/FH3" evidence="3">
    <location>
        <begin position="20"/>
        <end position="388"/>
    </location>
</feature>
<feature type="domain" description="FH2" evidence="4">
    <location>
        <begin position="601"/>
        <end position="998"/>
    </location>
</feature>
<feature type="domain" description="DAD">
    <location>
        <begin position="1134"/>
        <end position="1158"/>
    </location>
</feature>
<feature type="region of interest" description="Disordered" evidence="5">
    <location>
        <begin position="8"/>
        <end position="29"/>
    </location>
</feature>
<feature type="region of interest" description="Disordered" evidence="5">
    <location>
        <begin position="417"/>
        <end position="523"/>
    </location>
</feature>
<feature type="region of interest" description="Disordered" evidence="5">
    <location>
        <begin position="990"/>
        <end position="1052"/>
    </location>
</feature>
<feature type="coiled-coil region" evidence="2">
    <location>
        <begin position="479"/>
        <end position="515"/>
    </location>
</feature>
<feature type="compositionally biased region" description="Polar residues" evidence="5">
    <location>
        <begin position="417"/>
        <end position="437"/>
    </location>
</feature>
<feature type="compositionally biased region" description="Low complexity" evidence="5">
    <location>
        <begin position="438"/>
        <end position="481"/>
    </location>
</feature>
<feature type="compositionally biased region" description="Basic and acidic residues" evidence="5">
    <location>
        <begin position="482"/>
        <end position="503"/>
    </location>
</feature>
<feature type="sequence conflict" description="In Ref. 1; BAC16798." evidence="9" ref="1">
    <original>L</original>
    <variation>S</variation>
    <location>
        <position position="334"/>
    </location>
</feature>
<feature type="strand" evidence="10">
    <location>
        <begin position="1"/>
        <end position="7"/>
    </location>
</feature>
<feature type="strand" evidence="10">
    <location>
        <begin position="11"/>
        <end position="13"/>
    </location>
</feature>
<feature type="strand" evidence="10">
    <location>
        <begin position="15"/>
        <end position="18"/>
    </location>
</feature>
<feature type="strand" evidence="10">
    <location>
        <begin position="27"/>
        <end position="32"/>
    </location>
</feature>
<feature type="strand" evidence="10">
    <location>
        <begin position="34"/>
        <end position="37"/>
    </location>
</feature>
<feature type="helix" evidence="10">
    <location>
        <begin position="38"/>
        <end position="48"/>
    </location>
</feature>
<feature type="helix" evidence="10">
    <location>
        <begin position="53"/>
        <end position="58"/>
    </location>
</feature>
<feature type="strand" evidence="10">
    <location>
        <begin position="59"/>
        <end position="62"/>
    </location>
</feature>
<feature type="turn" evidence="10">
    <location>
        <begin position="64"/>
        <end position="66"/>
    </location>
</feature>
<feature type="helix" evidence="10">
    <location>
        <begin position="77"/>
        <end position="84"/>
    </location>
</feature>
<feature type="strand" evidence="10">
    <location>
        <begin position="88"/>
        <end position="92"/>
    </location>
</feature>
<dbReference type="EMBL" id="AB082544">
    <property type="protein sequence ID" value="BAC16798.1"/>
    <property type="molecule type" value="Genomic_DNA"/>
</dbReference>
<dbReference type="EMBL" id="AAFI02000100">
    <property type="protein sequence ID" value="EAL63715.1"/>
    <property type="molecule type" value="Genomic_DNA"/>
</dbReference>
<dbReference type="RefSeq" id="XP_637272.1">
    <property type="nucleotide sequence ID" value="XM_632180.1"/>
</dbReference>
<dbReference type="PDB" id="2L1A">
    <property type="method" value="NMR"/>
    <property type="chains" value="A=1-100"/>
</dbReference>
<dbReference type="PDBsum" id="2L1A"/>
<dbReference type="BMRB" id="Q54KF1"/>
<dbReference type="SMR" id="Q54KF1"/>
<dbReference type="FunCoup" id="Q54KF1">
    <property type="interactions" value="2"/>
</dbReference>
<dbReference type="STRING" id="44689.Q54KF1"/>
<dbReference type="GlyGen" id="Q54KF1">
    <property type="glycosylation" value="2 sites"/>
</dbReference>
<dbReference type="PaxDb" id="44689-DDB0191362"/>
<dbReference type="EnsemblProtists" id="EAL63715">
    <property type="protein sequence ID" value="EAL63715"/>
    <property type="gene ID" value="DDB_G0287295"/>
</dbReference>
<dbReference type="GeneID" id="8626103"/>
<dbReference type="KEGG" id="ddi:DDB_G0287295"/>
<dbReference type="dictyBase" id="DDB_G0287295">
    <property type="gene designation" value="forC"/>
</dbReference>
<dbReference type="VEuPathDB" id="AmoebaDB:DDB_G0287295"/>
<dbReference type="eggNOG" id="KOG1922">
    <property type="taxonomic scope" value="Eukaryota"/>
</dbReference>
<dbReference type="eggNOG" id="KOG1925">
    <property type="taxonomic scope" value="Eukaryota"/>
</dbReference>
<dbReference type="HOGENOM" id="CLU_287208_0_0_1"/>
<dbReference type="InParanoid" id="Q54KF1"/>
<dbReference type="OMA" id="NYRAPTE"/>
<dbReference type="EvolutionaryTrace" id="Q54KF1"/>
<dbReference type="PRO" id="PR:Q54KF1"/>
<dbReference type="Proteomes" id="UP000002195">
    <property type="component" value="Chromosome 5"/>
</dbReference>
<dbReference type="GO" id="GO:0005911">
    <property type="term" value="C:cell-cell junction"/>
    <property type="evidence" value="ECO:0000314"/>
    <property type="project" value="dictyBase"/>
</dbReference>
<dbReference type="GO" id="GO:0005737">
    <property type="term" value="C:cytoplasm"/>
    <property type="evidence" value="ECO:0000314"/>
    <property type="project" value="dictyBase"/>
</dbReference>
<dbReference type="GO" id="GO:0005856">
    <property type="term" value="C:cytoskeleton"/>
    <property type="evidence" value="ECO:0000318"/>
    <property type="project" value="GO_Central"/>
</dbReference>
<dbReference type="GO" id="GO:0005829">
    <property type="term" value="C:cytosol"/>
    <property type="evidence" value="ECO:0007669"/>
    <property type="project" value="UniProtKB-SubCell"/>
</dbReference>
<dbReference type="GO" id="GO:0044354">
    <property type="term" value="C:macropinosome"/>
    <property type="evidence" value="ECO:0000314"/>
    <property type="project" value="dictyBase"/>
</dbReference>
<dbReference type="GO" id="GO:0051015">
    <property type="term" value="F:actin filament binding"/>
    <property type="evidence" value="ECO:0000314"/>
    <property type="project" value="dictyBase"/>
</dbReference>
<dbReference type="GO" id="GO:0051017">
    <property type="term" value="P:actin filament bundle assembly"/>
    <property type="evidence" value="ECO:0000314"/>
    <property type="project" value="dictyBase"/>
</dbReference>
<dbReference type="GO" id="GO:0030866">
    <property type="term" value="P:cortical actin cytoskeleton organization"/>
    <property type="evidence" value="ECO:0000318"/>
    <property type="project" value="GO_Central"/>
</dbReference>
<dbReference type="GO" id="GO:0031154">
    <property type="term" value="P:culmination involved in sorocarp development"/>
    <property type="evidence" value="ECO:0000315"/>
    <property type="project" value="dictyBase"/>
</dbReference>
<dbReference type="GO" id="GO:0010467">
    <property type="term" value="P:gene expression"/>
    <property type="evidence" value="ECO:0000314"/>
    <property type="project" value="dictyBase"/>
</dbReference>
<dbReference type="GO" id="GO:0044671">
    <property type="term" value="P:sorocarp spore cell differentiation"/>
    <property type="evidence" value="ECO:0000315"/>
    <property type="project" value="dictyBase"/>
</dbReference>
<dbReference type="Gene3D" id="3.10.20.530">
    <property type="match status" value="1"/>
</dbReference>
<dbReference type="Gene3D" id="1.20.58.2220">
    <property type="entry name" value="Formin, FH2 domain"/>
    <property type="match status" value="1"/>
</dbReference>
<dbReference type="Gene3D" id="1.25.10.10">
    <property type="entry name" value="Leucine-rich Repeat Variant"/>
    <property type="match status" value="1"/>
</dbReference>
<dbReference type="InterPro" id="IPR011989">
    <property type="entry name" value="ARM-like"/>
</dbReference>
<dbReference type="InterPro" id="IPR016024">
    <property type="entry name" value="ARM-type_fold"/>
</dbReference>
<dbReference type="InterPro" id="IPR015425">
    <property type="entry name" value="FH2_Formin"/>
</dbReference>
<dbReference type="InterPro" id="IPR042201">
    <property type="entry name" value="FH2_Formin_sf"/>
</dbReference>
<dbReference type="InterPro" id="IPR056771">
    <property type="entry name" value="FH3_FHOD1-3-like"/>
</dbReference>
<dbReference type="InterPro" id="IPR049497">
    <property type="entry name" value="ForC_N"/>
</dbReference>
<dbReference type="InterPro" id="IPR014768">
    <property type="entry name" value="GBD/FH3_dom"/>
</dbReference>
<dbReference type="PANTHER" id="PTHR45920">
    <property type="entry name" value="FORMIN HOMOLOGY 2 DOMAIN CONTAINING, ISOFORM I"/>
    <property type="match status" value="1"/>
</dbReference>
<dbReference type="PANTHER" id="PTHR45920:SF6">
    <property type="entry name" value="FORMIN-C"/>
    <property type="match status" value="1"/>
</dbReference>
<dbReference type="Pfam" id="PF02181">
    <property type="entry name" value="FH2"/>
    <property type="match status" value="1"/>
</dbReference>
<dbReference type="Pfam" id="PF24959">
    <property type="entry name" value="FH3_FHOD1-3"/>
    <property type="match status" value="1"/>
</dbReference>
<dbReference type="Pfam" id="PF21573">
    <property type="entry name" value="ForC_N"/>
    <property type="match status" value="1"/>
</dbReference>
<dbReference type="SMART" id="SM00498">
    <property type="entry name" value="FH2"/>
    <property type="match status" value="1"/>
</dbReference>
<dbReference type="SUPFAM" id="SSF48371">
    <property type="entry name" value="ARM repeat"/>
    <property type="match status" value="1"/>
</dbReference>
<dbReference type="SUPFAM" id="SSF101447">
    <property type="entry name" value="Formin homology 2 domain (FH2 domain)"/>
    <property type="match status" value="1"/>
</dbReference>
<dbReference type="PROSITE" id="PS51444">
    <property type="entry name" value="FH2"/>
    <property type="match status" value="1"/>
</dbReference>
<dbReference type="PROSITE" id="PS51232">
    <property type="entry name" value="GBD_FH3"/>
    <property type="match status" value="1"/>
</dbReference>
<comment type="function">
    <text evidence="6">Formins play an important role in the nucleation of actin and the formation of linear actin filaments.</text>
</comment>
<comment type="subunit">
    <text evidence="8">Interacts (via GBD/FH3 domain) with activated Rho-GTPases.</text>
</comment>
<comment type="subcellular location">
    <subcellularLocation>
        <location evidence="6">Cytoplasm</location>
        <location evidence="6">Cytosol</location>
    </subcellularLocation>
    <subcellularLocation>
        <location evidence="6">Cytoplasm</location>
        <location evidence="6">Cytoskeleton</location>
    </subcellularLocation>
    <text>Found localized to the crowns, which are macropinocytotic cups rich in F-actin.</text>
</comment>
<comment type="developmental stage">
    <text evidence="7">Expression increases during transition to multi-cellular stages, and levels remain constantly high throughout the rest of development.</text>
</comment>
<comment type="domain">
    <text evidence="1">The DAD domain regulates activation via by an autoinhibitory interaction with the GBD/FH3 domain. This autoinhibition is released upon competitive binding of an activated GTPase. The release of DAD allows the FH2 domain to then nucleate and elongate nonbranched actin filaments (By similarity).</text>
</comment>
<comment type="disruption phenotype">
    <text evidence="6">Null cells grow normally during the vegetative phase and, when starved, migrate normally and form tight aggregates. Subsequently, however, null cells make aberrant fruiting bodies with short stalks and sori that remain unlifted. Aggregates are also unable to migrate as slugs, suggesting it is involved in mediating cell movement during multicellular stages of Dictyostelium development.</text>
</comment>
<comment type="similarity">
    <text evidence="9">Belongs to the formin homology family. Diaphanous subfamily.</text>
</comment>
<evidence type="ECO:0000250" key="1"/>
<evidence type="ECO:0000255" key="2"/>
<evidence type="ECO:0000255" key="3">
    <source>
        <dbReference type="PROSITE-ProRule" id="PRU00579"/>
    </source>
</evidence>
<evidence type="ECO:0000255" key="4">
    <source>
        <dbReference type="PROSITE-ProRule" id="PRU00774"/>
    </source>
</evidence>
<evidence type="ECO:0000256" key="5">
    <source>
        <dbReference type="SAM" id="MobiDB-lite"/>
    </source>
</evidence>
<evidence type="ECO:0000269" key="6">
    <source>
    </source>
</evidence>
<evidence type="ECO:0000269" key="7">
    <source>
    </source>
</evidence>
<evidence type="ECO:0000269" key="8">
    <source>
    </source>
</evidence>
<evidence type="ECO:0000305" key="9"/>
<evidence type="ECO:0007829" key="10">
    <source>
        <dbReference type="PDB" id="2L1A"/>
    </source>
</evidence>